<comment type="function">
    <text evidence="1">An essential GTPase that binds both GDP and GTP, with rapid nucleotide exchange. Plays a role in 16S rRNA processing and 30S ribosomal subunit biogenesis and possibly also in cell cycle regulation and energy metabolism.</text>
</comment>
<comment type="subunit">
    <text evidence="1">Monomer.</text>
</comment>
<comment type="subcellular location">
    <subcellularLocation>
        <location>Cytoplasm</location>
    </subcellularLocation>
    <subcellularLocation>
        <location evidence="1">Cell membrane</location>
        <topology evidence="1">Peripheral membrane protein</topology>
    </subcellularLocation>
</comment>
<comment type="similarity">
    <text evidence="1 2">Belongs to the TRAFAC class TrmE-Era-EngA-EngB-Septin-like GTPase superfamily. Era GTPase family.</text>
</comment>
<evidence type="ECO:0000255" key="1">
    <source>
        <dbReference type="HAMAP-Rule" id="MF_00367"/>
    </source>
</evidence>
<evidence type="ECO:0000255" key="2">
    <source>
        <dbReference type="PROSITE-ProRule" id="PRU01050"/>
    </source>
</evidence>
<sequence>MEENNQAFHSGFVAIVGRPNVGKSTFLNYVIGQKVAIMSNVPQTTRNKIQGIYTTDREQIVFIDTPGIHKSHNKLGDFMVQSAMSSLNEVDAIMFMVNADEPRGAGDNYIIERLKKITDRPVYLVINKIDLVHPDELLPIVDSYKDAMDWTEVFPISALQGNNINELVTTLSQHMPEGPKYYPDDQVTDHPERFVVSELIREKVLQLTRQEVPHSVAVVIETMKSNDEGLVNIQATIIVDRSSQKGIVIGKGGKMLKEIGSRARVDIEHLLGSRVYLELWVKVSEGWRDKQGILQSFGYKKDEY</sequence>
<organism>
    <name type="scientific">Pediococcus pentosaceus (strain ATCC 25745 / CCUG 21536 / LMG 10740 / 183-1w)</name>
    <dbReference type="NCBI Taxonomy" id="278197"/>
    <lineage>
        <taxon>Bacteria</taxon>
        <taxon>Bacillati</taxon>
        <taxon>Bacillota</taxon>
        <taxon>Bacilli</taxon>
        <taxon>Lactobacillales</taxon>
        <taxon>Lactobacillaceae</taxon>
        <taxon>Pediococcus</taxon>
    </lineage>
</organism>
<keyword id="KW-1003">Cell membrane</keyword>
<keyword id="KW-0963">Cytoplasm</keyword>
<keyword id="KW-0342">GTP-binding</keyword>
<keyword id="KW-0472">Membrane</keyword>
<keyword id="KW-0547">Nucleotide-binding</keyword>
<keyword id="KW-0690">Ribosome biogenesis</keyword>
<keyword id="KW-0694">RNA-binding</keyword>
<keyword id="KW-0699">rRNA-binding</keyword>
<dbReference type="EMBL" id="CP000422">
    <property type="protein sequence ID" value="ABJ68159.1"/>
    <property type="molecule type" value="Genomic_DNA"/>
</dbReference>
<dbReference type="RefSeq" id="WP_011673493.1">
    <property type="nucleotide sequence ID" value="NC_008525.1"/>
</dbReference>
<dbReference type="SMR" id="Q03F63"/>
<dbReference type="STRING" id="278197.PEPE_1104"/>
<dbReference type="GeneID" id="33062720"/>
<dbReference type="KEGG" id="ppe:PEPE_1104"/>
<dbReference type="eggNOG" id="COG1159">
    <property type="taxonomic scope" value="Bacteria"/>
</dbReference>
<dbReference type="HOGENOM" id="CLU_038009_1_0_9"/>
<dbReference type="OrthoDB" id="9805918at2"/>
<dbReference type="Proteomes" id="UP000000773">
    <property type="component" value="Chromosome"/>
</dbReference>
<dbReference type="GO" id="GO:0005829">
    <property type="term" value="C:cytosol"/>
    <property type="evidence" value="ECO:0007669"/>
    <property type="project" value="TreeGrafter"/>
</dbReference>
<dbReference type="GO" id="GO:0005886">
    <property type="term" value="C:plasma membrane"/>
    <property type="evidence" value="ECO:0007669"/>
    <property type="project" value="UniProtKB-SubCell"/>
</dbReference>
<dbReference type="GO" id="GO:0005525">
    <property type="term" value="F:GTP binding"/>
    <property type="evidence" value="ECO:0007669"/>
    <property type="project" value="UniProtKB-UniRule"/>
</dbReference>
<dbReference type="GO" id="GO:0003924">
    <property type="term" value="F:GTPase activity"/>
    <property type="evidence" value="ECO:0007669"/>
    <property type="project" value="UniProtKB-UniRule"/>
</dbReference>
<dbReference type="GO" id="GO:0043024">
    <property type="term" value="F:ribosomal small subunit binding"/>
    <property type="evidence" value="ECO:0007669"/>
    <property type="project" value="TreeGrafter"/>
</dbReference>
<dbReference type="GO" id="GO:0070181">
    <property type="term" value="F:small ribosomal subunit rRNA binding"/>
    <property type="evidence" value="ECO:0007669"/>
    <property type="project" value="UniProtKB-UniRule"/>
</dbReference>
<dbReference type="GO" id="GO:0000028">
    <property type="term" value="P:ribosomal small subunit assembly"/>
    <property type="evidence" value="ECO:0007669"/>
    <property type="project" value="TreeGrafter"/>
</dbReference>
<dbReference type="CDD" id="cd04163">
    <property type="entry name" value="Era"/>
    <property type="match status" value="1"/>
</dbReference>
<dbReference type="CDD" id="cd22534">
    <property type="entry name" value="KH-II_Era"/>
    <property type="match status" value="1"/>
</dbReference>
<dbReference type="FunFam" id="3.30.300.20:FF:000003">
    <property type="entry name" value="GTPase Era"/>
    <property type="match status" value="1"/>
</dbReference>
<dbReference type="FunFam" id="3.40.50.300:FF:000094">
    <property type="entry name" value="GTPase Era"/>
    <property type="match status" value="1"/>
</dbReference>
<dbReference type="Gene3D" id="3.30.300.20">
    <property type="match status" value="1"/>
</dbReference>
<dbReference type="Gene3D" id="3.40.50.300">
    <property type="entry name" value="P-loop containing nucleotide triphosphate hydrolases"/>
    <property type="match status" value="1"/>
</dbReference>
<dbReference type="HAMAP" id="MF_00367">
    <property type="entry name" value="GTPase_Era"/>
    <property type="match status" value="1"/>
</dbReference>
<dbReference type="InterPro" id="IPR030388">
    <property type="entry name" value="G_ERA_dom"/>
</dbReference>
<dbReference type="InterPro" id="IPR006073">
    <property type="entry name" value="GTP-bd"/>
</dbReference>
<dbReference type="InterPro" id="IPR005662">
    <property type="entry name" value="GTPase_Era-like"/>
</dbReference>
<dbReference type="InterPro" id="IPR015946">
    <property type="entry name" value="KH_dom-like_a/b"/>
</dbReference>
<dbReference type="InterPro" id="IPR004044">
    <property type="entry name" value="KH_dom_type_2"/>
</dbReference>
<dbReference type="InterPro" id="IPR009019">
    <property type="entry name" value="KH_sf_prok-type"/>
</dbReference>
<dbReference type="InterPro" id="IPR027417">
    <property type="entry name" value="P-loop_NTPase"/>
</dbReference>
<dbReference type="InterPro" id="IPR005225">
    <property type="entry name" value="Small_GTP-bd"/>
</dbReference>
<dbReference type="NCBIfam" id="TIGR00436">
    <property type="entry name" value="era"/>
    <property type="match status" value="1"/>
</dbReference>
<dbReference type="NCBIfam" id="NF000908">
    <property type="entry name" value="PRK00089.1"/>
    <property type="match status" value="1"/>
</dbReference>
<dbReference type="NCBIfam" id="TIGR00231">
    <property type="entry name" value="small_GTP"/>
    <property type="match status" value="1"/>
</dbReference>
<dbReference type="PANTHER" id="PTHR42698">
    <property type="entry name" value="GTPASE ERA"/>
    <property type="match status" value="1"/>
</dbReference>
<dbReference type="PANTHER" id="PTHR42698:SF1">
    <property type="entry name" value="GTPASE ERA, MITOCHONDRIAL"/>
    <property type="match status" value="1"/>
</dbReference>
<dbReference type="Pfam" id="PF07650">
    <property type="entry name" value="KH_2"/>
    <property type="match status" value="1"/>
</dbReference>
<dbReference type="Pfam" id="PF01926">
    <property type="entry name" value="MMR_HSR1"/>
    <property type="match status" value="1"/>
</dbReference>
<dbReference type="PRINTS" id="PR00326">
    <property type="entry name" value="GTP1OBG"/>
</dbReference>
<dbReference type="SUPFAM" id="SSF52540">
    <property type="entry name" value="P-loop containing nucleoside triphosphate hydrolases"/>
    <property type="match status" value="1"/>
</dbReference>
<dbReference type="SUPFAM" id="SSF54814">
    <property type="entry name" value="Prokaryotic type KH domain (KH-domain type II)"/>
    <property type="match status" value="1"/>
</dbReference>
<dbReference type="PROSITE" id="PS51713">
    <property type="entry name" value="G_ERA"/>
    <property type="match status" value="1"/>
</dbReference>
<dbReference type="PROSITE" id="PS50823">
    <property type="entry name" value="KH_TYPE_2"/>
    <property type="match status" value="1"/>
</dbReference>
<reference key="1">
    <citation type="journal article" date="2006" name="Proc. Natl. Acad. Sci. U.S.A.">
        <title>Comparative genomics of the lactic acid bacteria.</title>
        <authorList>
            <person name="Makarova K.S."/>
            <person name="Slesarev A."/>
            <person name="Wolf Y.I."/>
            <person name="Sorokin A."/>
            <person name="Mirkin B."/>
            <person name="Koonin E.V."/>
            <person name="Pavlov A."/>
            <person name="Pavlova N."/>
            <person name="Karamychev V."/>
            <person name="Polouchine N."/>
            <person name="Shakhova V."/>
            <person name="Grigoriev I."/>
            <person name="Lou Y."/>
            <person name="Rohksar D."/>
            <person name="Lucas S."/>
            <person name="Huang K."/>
            <person name="Goodstein D.M."/>
            <person name="Hawkins T."/>
            <person name="Plengvidhya V."/>
            <person name="Welker D."/>
            <person name="Hughes J."/>
            <person name="Goh Y."/>
            <person name="Benson A."/>
            <person name="Baldwin K."/>
            <person name="Lee J.-H."/>
            <person name="Diaz-Muniz I."/>
            <person name="Dosti B."/>
            <person name="Smeianov V."/>
            <person name="Wechter W."/>
            <person name="Barabote R."/>
            <person name="Lorca G."/>
            <person name="Altermann E."/>
            <person name="Barrangou R."/>
            <person name="Ganesan B."/>
            <person name="Xie Y."/>
            <person name="Rawsthorne H."/>
            <person name="Tamir D."/>
            <person name="Parker C."/>
            <person name="Breidt F."/>
            <person name="Broadbent J.R."/>
            <person name="Hutkins R."/>
            <person name="O'Sullivan D."/>
            <person name="Steele J."/>
            <person name="Unlu G."/>
            <person name="Saier M.H. Jr."/>
            <person name="Klaenhammer T."/>
            <person name="Richardson P."/>
            <person name="Kozyavkin S."/>
            <person name="Weimer B.C."/>
            <person name="Mills D.A."/>
        </authorList>
    </citation>
    <scope>NUCLEOTIDE SEQUENCE [LARGE SCALE GENOMIC DNA]</scope>
    <source>
        <strain>ATCC 25745 / CCUG 21536 / LMG 10740 / 183-1w</strain>
    </source>
</reference>
<feature type="chain" id="PRO_1000205547" description="GTPase Era">
    <location>
        <begin position="1"/>
        <end position="304"/>
    </location>
</feature>
<feature type="domain" description="Era-type G" evidence="2">
    <location>
        <begin position="9"/>
        <end position="177"/>
    </location>
</feature>
<feature type="domain" description="KH type-2" evidence="1">
    <location>
        <begin position="208"/>
        <end position="285"/>
    </location>
</feature>
<feature type="region of interest" description="G1" evidence="2">
    <location>
        <begin position="17"/>
        <end position="24"/>
    </location>
</feature>
<feature type="region of interest" description="G2" evidence="2">
    <location>
        <begin position="43"/>
        <end position="47"/>
    </location>
</feature>
<feature type="region of interest" description="G3" evidence="2">
    <location>
        <begin position="64"/>
        <end position="67"/>
    </location>
</feature>
<feature type="region of interest" description="G4" evidence="2">
    <location>
        <begin position="127"/>
        <end position="130"/>
    </location>
</feature>
<feature type="region of interest" description="G5" evidence="2">
    <location>
        <begin position="156"/>
        <end position="158"/>
    </location>
</feature>
<feature type="binding site" evidence="1">
    <location>
        <begin position="17"/>
        <end position="24"/>
    </location>
    <ligand>
        <name>GTP</name>
        <dbReference type="ChEBI" id="CHEBI:37565"/>
    </ligand>
</feature>
<feature type="binding site" evidence="1">
    <location>
        <begin position="64"/>
        <end position="68"/>
    </location>
    <ligand>
        <name>GTP</name>
        <dbReference type="ChEBI" id="CHEBI:37565"/>
    </ligand>
</feature>
<feature type="binding site" evidence="1">
    <location>
        <begin position="127"/>
        <end position="130"/>
    </location>
    <ligand>
        <name>GTP</name>
        <dbReference type="ChEBI" id="CHEBI:37565"/>
    </ligand>
</feature>
<name>ERA_PEDPA</name>
<proteinExistence type="inferred from homology"/>
<gene>
    <name evidence="1" type="primary">era</name>
    <name type="ordered locus">PEPE_1104</name>
</gene>
<accession>Q03F63</accession>
<protein>
    <recommendedName>
        <fullName evidence="1">GTPase Era</fullName>
    </recommendedName>
</protein>